<organism>
    <name type="scientific">Desulfotalea psychrophila (strain LSv54 / DSM 12343)</name>
    <dbReference type="NCBI Taxonomy" id="177439"/>
    <lineage>
        <taxon>Bacteria</taxon>
        <taxon>Pseudomonadati</taxon>
        <taxon>Thermodesulfobacteriota</taxon>
        <taxon>Desulfobulbia</taxon>
        <taxon>Desulfobulbales</taxon>
        <taxon>Desulfocapsaceae</taxon>
        <taxon>Desulfotalea</taxon>
    </lineage>
</organism>
<reference key="1">
    <citation type="journal article" date="2004" name="Environ. Microbiol.">
        <title>The genome of Desulfotalea psychrophila, a sulfate-reducing bacterium from permanently cold Arctic sediments.</title>
        <authorList>
            <person name="Rabus R."/>
            <person name="Ruepp A."/>
            <person name="Frickey T."/>
            <person name="Rattei T."/>
            <person name="Fartmann B."/>
            <person name="Stark M."/>
            <person name="Bauer M."/>
            <person name="Zibat A."/>
            <person name="Lombardot T."/>
            <person name="Becker I."/>
            <person name="Amann J."/>
            <person name="Gellner K."/>
            <person name="Teeling H."/>
            <person name="Leuschner W.D."/>
            <person name="Gloeckner F.-O."/>
            <person name="Lupas A.N."/>
            <person name="Amann R."/>
            <person name="Klenk H.-P."/>
        </authorList>
    </citation>
    <scope>NUCLEOTIDE SEQUENCE [LARGE SCALE GENOMIC DNA]</scope>
    <source>
        <strain>DSM 12343 / LSv54</strain>
    </source>
</reference>
<feature type="chain" id="PRO_0000160498" description="ATP-dependent protease ATPase subunit HslU">
    <location>
        <begin position="1"/>
        <end position="457"/>
    </location>
</feature>
<feature type="binding site" evidence="1">
    <location>
        <position position="21"/>
    </location>
    <ligand>
        <name>ATP</name>
        <dbReference type="ChEBI" id="CHEBI:30616"/>
    </ligand>
</feature>
<feature type="binding site" evidence="1">
    <location>
        <begin position="63"/>
        <end position="68"/>
    </location>
    <ligand>
        <name>ATP</name>
        <dbReference type="ChEBI" id="CHEBI:30616"/>
    </ligand>
</feature>
<feature type="binding site" evidence="1">
    <location>
        <position position="269"/>
    </location>
    <ligand>
        <name>ATP</name>
        <dbReference type="ChEBI" id="CHEBI:30616"/>
    </ligand>
</feature>
<feature type="binding site" evidence="1">
    <location>
        <position position="335"/>
    </location>
    <ligand>
        <name>ATP</name>
        <dbReference type="ChEBI" id="CHEBI:30616"/>
    </ligand>
</feature>
<feature type="binding site" evidence="1">
    <location>
        <position position="407"/>
    </location>
    <ligand>
        <name>ATP</name>
        <dbReference type="ChEBI" id="CHEBI:30616"/>
    </ligand>
</feature>
<proteinExistence type="inferred from homology"/>
<accession>Q6AJQ6</accession>
<name>HSLU_DESPS</name>
<sequence>MTISSSLTPKETLAELDRYIVGQAAAKRSVAIALRNRWRRQQVPSPLREEIAPKNIIMIGPTGVGKTEIARRLASLAQSPFIKVEASKFTEVGYVGRDVESMIRDLVELAISMVKDEEKKRIEGLAEANAEDRILDLLLPPTPVHSESSVDLLPASADVSAAGSSTKEKFRQMLRDGKLDEREVEVEVTETSQAPMVEVMGVSGMDDMQSNIQDAFSRMFPKKTKQSKMKVPDALDVLTKEEMEKLVDMEMVLKEALRRTEQSGIVFLDEIDKVASKGGSSHGPEVSREGVQRDLLPIVEGATVSTKYGMVKTDHILFIASGAFHVAKPSDLIPELQGRFPIRVELESLGKDEFVRILTEPENALTKQYIALLATEGVTLRFEDEAIEEIATIAVQVNESTEEIGARRLHTVVERVLDVLSFDACEREESEFVVTAQYVRDQLSEIAEDQDLSRYIL</sequence>
<dbReference type="EMBL" id="CR522870">
    <property type="protein sequence ID" value="CAG37424.1"/>
    <property type="molecule type" value="Genomic_DNA"/>
</dbReference>
<dbReference type="RefSeq" id="WP_011189936.1">
    <property type="nucleotide sequence ID" value="NC_006138.1"/>
</dbReference>
<dbReference type="SMR" id="Q6AJQ6"/>
<dbReference type="STRING" id="177439.DP2695"/>
<dbReference type="KEGG" id="dps:DP2695"/>
<dbReference type="eggNOG" id="COG1220">
    <property type="taxonomic scope" value="Bacteria"/>
</dbReference>
<dbReference type="HOGENOM" id="CLU_033123_0_0_7"/>
<dbReference type="OrthoDB" id="9804062at2"/>
<dbReference type="Proteomes" id="UP000000602">
    <property type="component" value="Chromosome"/>
</dbReference>
<dbReference type="GO" id="GO:0009376">
    <property type="term" value="C:HslUV protease complex"/>
    <property type="evidence" value="ECO:0007669"/>
    <property type="project" value="UniProtKB-UniRule"/>
</dbReference>
<dbReference type="GO" id="GO:0005524">
    <property type="term" value="F:ATP binding"/>
    <property type="evidence" value="ECO:0007669"/>
    <property type="project" value="UniProtKB-UniRule"/>
</dbReference>
<dbReference type="GO" id="GO:0016887">
    <property type="term" value="F:ATP hydrolysis activity"/>
    <property type="evidence" value="ECO:0007669"/>
    <property type="project" value="InterPro"/>
</dbReference>
<dbReference type="GO" id="GO:0008233">
    <property type="term" value="F:peptidase activity"/>
    <property type="evidence" value="ECO:0007669"/>
    <property type="project" value="InterPro"/>
</dbReference>
<dbReference type="GO" id="GO:0036402">
    <property type="term" value="F:proteasome-activating activity"/>
    <property type="evidence" value="ECO:0007669"/>
    <property type="project" value="UniProtKB-UniRule"/>
</dbReference>
<dbReference type="GO" id="GO:0043335">
    <property type="term" value="P:protein unfolding"/>
    <property type="evidence" value="ECO:0007669"/>
    <property type="project" value="UniProtKB-UniRule"/>
</dbReference>
<dbReference type="GO" id="GO:0051603">
    <property type="term" value="P:proteolysis involved in protein catabolic process"/>
    <property type="evidence" value="ECO:0007669"/>
    <property type="project" value="TreeGrafter"/>
</dbReference>
<dbReference type="CDD" id="cd19498">
    <property type="entry name" value="RecA-like_HslU"/>
    <property type="match status" value="1"/>
</dbReference>
<dbReference type="FunFam" id="3.40.50.300:FF:000213">
    <property type="entry name" value="ATP-dependent protease ATPase subunit HslU"/>
    <property type="match status" value="1"/>
</dbReference>
<dbReference type="FunFam" id="3.40.50.300:FF:000220">
    <property type="entry name" value="ATP-dependent protease ATPase subunit HslU"/>
    <property type="match status" value="1"/>
</dbReference>
<dbReference type="Gene3D" id="1.10.8.60">
    <property type="match status" value="1"/>
</dbReference>
<dbReference type="Gene3D" id="1.10.8.10">
    <property type="entry name" value="DNA helicase RuvA subunit, C-terminal domain"/>
    <property type="match status" value="1"/>
</dbReference>
<dbReference type="Gene3D" id="3.40.50.300">
    <property type="entry name" value="P-loop containing nucleotide triphosphate hydrolases"/>
    <property type="match status" value="2"/>
</dbReference>
<dbReference type="HAMAP" id="MF_00249">
    <property type="entry name" value="HslU"/>
    <property type="match status" value="1"/>
</dbReference>
<dbReference type="InterPro" id="IPR003593">
    <property type="entry name" value="AAA+_ATPase"/>
</dbReference>
<dbReference type="InterPro" id="IPR050052">
    <property type="entry name" value="ATP-dep_Clp_protease_ClpX"/>
</dbReference>
<dbReference type="InterPro" id="IPR003959">
    <property type="entry name" value="ATPase_AAA_core"/>
</dbReference>
<dbReference type="InterPro" id="IPR019489">
    <property type="entry name" value="Clp_ATPase_C"/>
</dbReference>
<dbReference type="InterPro" id="IPR004491">
    <property type="entry name" value="HslU"/>
</dbReference>
<dbReference type="InterPro" id="IPR027417">
    <property type="entry name" value="P-loop_NTPase"/>
</dbReference>
<dbReference type="NCBIfam" id="TIGR00390">
    <property type="entry name" value="hslU"/>
    <property type="match status" value="1"/>
</dbReference>
<dbReference type="NCBIfam" id="NF003544">
    <property type="entry name" value="PRK05201.1"/>
    <property type="match status" value="1"/>
</dbReference>
<dbReference type="PANTHER" id="PTHR48102">
    <property type="entry name" value="ATP-DEPENDENT CLP PROTEASE ATP-BINDING SUBUNIT CLPX-LIKE, MITOCHONDRIAL-RELATED"/>
    <property type="match status" value="1"/>
</dbReference>
<dbReference type="PANTHER" id="PTHR48102:SF3">
    <property type="entry name" value="ATP-DEPENDENT PROTEASE ATPASE SUBUNIT HSLU"/>
    <property type="match status" value="1"/>
</dbReference>
<dbReference type="Pfam" id="PF00004">
    <property type="entry name" value="AAA"/>
    <property type="match status" value="1"/>
</dbReference>
<dbReference type="Pfam" id="PF07724">
    <property type="entry name" value="AAA_2"/>
    <property type="match status" value="1"/>
</dbReference>
<dbReference type="SMART" id="SM00382">
    <property type="entry name" value="AAA"/>
    <property type="match status" value="1"/>
</dbReference>
<dbReference type="SMART" id="SM01086">
    <property type="entry name" value="ClpB_D2-small"/>
    <property type="match status" value="1"/>
</dbReference>
<dbReference type="SUPFAM" id="SSF52540">
    <property type="entry name" value="P-loop containing nucleoside triphosphate hydrolases"/>
    <property type="match status" value="1"/>
</dbReference>
<keyword id="KW-0067">ATP-binding</keyword>
<keyword id="KW-0143">Chaperone</keyword>
<keyword id="KW-0963">Cytoplasm</keyword>
<keyword id="KW-0547">Nucleotide-binding</keyword>
<keyword id="KW-1185">Reference proteome</keyword>
<comment type="function">
    <text evidence="1">ATPase subunit of a proteasome-like degradation complex; this subunit has chaperone activity. The binding of ATP and its subsequent hydrolysis by HslU are essential for unfolding of protein substrates subsequently hydrolyzed by HslV. HslU recognizes the N-terminal part of its protein substrates and unfolds these before they are guided to HslV for hydrolysis.</text>
</comment>
<comment type="subunit">
    <text evidence="1">A double ring-shaped homohexamer of HslV is capped on each side by a ring-shaped HslU homohexamer. The assembly of the HslU/HslV complex is dependent on binding of ATP.</text>
</comment>
<comment type="subcellular location">
    <subcellularLocation>
        <location evidence="1">Cytoplasm</location>
    </subcellularLocation>
</comment>
<comment type="similarity">
    <text evidence="1">Belongs to the ClpX chaperone family. HslU subfamily.</text>
</comment>
<protein>
    <recommendedName>
        <fullName evidence="1">ATP-dependent protease ATPase subunit HslU</fullName>
    </recommendedName>
    <alternativeName>
        <fullName evidence="1">Unfoldase HslU</fullName>
    </alternativeName>
</protein>
<gene>
    <name evidence="1" type="primary">hslU</name>
    <name type="ordered locus">DP2695</name>
</gene>
<evidence type="ECO:0000255" key="1">
    <source>
        <dbReference type="HAMAP-Rule" id="MF_00249"/>
    </source>
</evidence>